<name>Y3745_BRUSU</name>
<comment type="function">
    <text evidence="2">Probably part of an ABC transporter complex. Probably responsible for energy coupling to the transport system (Probable).</text>
</comment>
<comment type="subunit">
    <text evidence="2">The complex is composed of two ATP-binding proteins (BRA0745), two transmembrane proteins (BRA0749) and a solute-binding protein (BRA0748).</text>
</comment>
<comment type="subcellular location">
    <subcellularLocation>
        <location evidence="2">Cell inner membrane</location>
        <topology evidence="2">Peripheral membrane protein</topology>
    </subcellularLocation>
</comment>
<comment type="similarity">
    <text evidence="2">Belongs to the ABC transporter superfamily.</text>
</comment>
<reference key="1">
    <citation type="journal article" date="2002" name="Proc. Natl. Acad. Sci. U.S.A.">
        <title>The Brucella suis genome reveals fundamental similarities between animal and plant pathogens and symbionts.</title>
        <authorList>
            <person name="Paulsen I.T."/>
            <person name="Seshadri R."/>
            <person name="Nelson K.E."/>
            <person name="Eisen J.A."/>
            <person name="Heidelberg J.F."/>
            <person name="Read T.D."/>
            <person name="Dodson R.J."/>
            <person name="Umayam L.A."/>
            <person name="Brinkac L.M."/>
            <person name="Beanan M.J."/>
            <person name="Daugherty S.C."/>
            <person name="DeBoy R.T."/>
            <person name="Durkin A.S."/>
            <person name="Kolonay J.F."/>
            <person name="Madupu R."/>
            <person name="Nelson W.C."/>
            <person name="Ayodeji B."/>
            <person name="Kraul M."/>
            <person name="Shetty J."/>
            <person name="Malek J.A."/>
            <person name="Van Aken S.E."/>
            <person name="Riedmuller S."/>
            <person name="Tettelin H."/>
            <person name="Gill S.R."/>
            <person name="White O."/>
            <person name="Salzberg S.L."/>
            <person name="Hoover D.L."/>
            <person name="Lindler L.E."/>
            <person name="Halling S.M."/>
            <person name="Boyle S.M."/>
            <person name="Fraser C.M."/>
        </authorList>
    </citation>
    <scope>NUCLEOTIDE SEQUENCE [LARGE SCALE GENOMIC DNA]</scope>
    <source>
        <strain>1330</strain>
    </source>
</reference>
<reference key="2">
    <citation type="journal article" date="2011" name="J. Bacteriol.">
        <title>Revised genome sequence of Brucella suis 1330.</title>
        <authorList>
            <person name="Tae H."/>
            <person name="Shallom S."/>
            <person name="Settlage R."/>
            <person name="Preston D."/>
            <person name="Adams L.G."/>
            <person name="Garner H.R."/>
        </authorList>
    </citation>
    <scope>NUCLEOTIDE SEQUENCE [LARGE SCALE GENOMIC DNA]</scope>
    <source>
        <strain>1330</strain>
    </source>
</reference>
<proteinExistence type="inferred from homology"/>
<feature type="chain" id="PRO_0000281201" description="Putative ATP-binding protein BRA0745/BS1330_II0738">
    <location>
        <begin position="1"/>
        <end position="350"/>
    </location>
</feature>
<feature type="domain" description="ABC transporter" evidence="1">
    <location>
        <begin position="4"/>
        <end position="234"/>
    </location>
</feature>
<feature type="binding site" evidence="1">
    <location>
        <begin position="36"/>
        <end position="43"/>
    </location>
    <ligand>
        <name>ATP</name>
        <dbReference type="ChEBI" id="CHEBI:30616"/>
    </ligand>
</feature>
<gene>
    <name type="ordered locus">BRA0745</name>
    <name type="ordered locus">BS1330_II0738</name>
</gene>
<sequence length="350" mass="37983">MKEVSLRGISKTFGQLTVLDRIDLEIHSGEFLVLVGPSGCGKSTLLRMVAGLEPISGGDLVIGGERANELPPQKRNIAMVFQSYALFPHMTARENIGFGPRIRGEKAAETAAKVDHAASILNLHSYLDRYPRQLSGGQRQRVAMGRAIVREPSVFLFDEPLSNLDAQLRVQMRTEIKALHQRLKSTVIYVTHDQIEAMTMADRIVVMNQGKIQQIGAPLDLYDRPANKFVAGFIGSPSMSFIPGTVADGFFCTGEGKKIAVSAAAKGARAAEAGIRPENFVIAREGAGLTLVVEVIEPTGPETHIYGRIAGEPVRAVFRERIQLAPGEQVPVTAGSEHIHLFDKESGLPL</sequence>
<protein>
    <recommendedName>
        <fullName>Putative ATP-binding protein BRA0745/BS1330_II0738</fullName>
        <ecNumber>7.-.-.-</ecNumber>
    </recommendedName>
</protein>
<evidence type="ECO:0000255" key="1">
    <source>
        <dbReference type="PROSITE-ProRule" id="PRU00434"/>
    </source>
</evidence>
<evidence type="ECO:0000305" key="2"/>
<accession>Q8FVT0</accession>
<accession>G0KDB5</accession>
<keyword id="KW-0067">ATP-binding</keyword>
<keyword id="KW-0997">Cell inner membrane</keyword>
<keyword id="KW-1003">Cell membrane</keyword>
<keyword id="KW-0472">Membrane</keyword>
<keyword id="KW-0547">Nucleotide-binding</keyword>
<keyword id="KW-1278">Translocase</keyword>
<keyword id="KW-0813">Transport</keyword>
<organism>
    <name type="scientific">Brucella suis biovar 1 (strain 1330)</name>
    <dbReference type="NCBI Taxonomy" id="204722"/>
    <lineage>
        <taxon>Bacteria</taxon>
        <taxon>Pseudomonadati</taxon>
        <taxon>Pseudomonadota</taxon>
        <taxon>Alphaproteobacteria</taxon>
        <taxon>Hyphomicrobiales</taxon>
        <taxon>Brucellaceae</taxon>
        <taxon>Brucella/Ochrobactrum group</taxon>
        <taxon>Brucella</taxon>
    </lineage>
</organism>
<dbReference type="EC" id="7.-.-.-"/>
<dbReference type="EMBL" id="AE014292">
    <property type="protein sequence ID" value="AAN33927.1"/>
    <property type="molecule type" value="Genomic_DNA"/>
</dbReference>
<dbReference type="EMBL" id="CP002998">
    <property type="protein sequence ID" value="AEM20203.1"/>
    <property type="molecule type" value="Genomic_DNA"/>
</dbReference>
<dbReference type="RefSeq" id="WP_004690273.1">
    <property type="nucleotide sequence ID" value="NZ_KN046805.1"/>
</dbReference>
<dbReference type="SMR" id="Q8FVT0"/>
<dbReference type="KEGG" id="bms:BRA0745"/>
<dbReference type="KEGG" id="bsi:BS1330_II0738"/>
<dbReference type="PATRIC" id="fig|204722.21.peg.1332"/>
<dbReference type="HOGENOM" id="CLU_000604_1_1_5"/>
<dbReference type="Proteomes" id="UP000007104">
    <property type="component" value="Chromosome II"/>
</dbReference>
<dbReference type="GO" id="GO:0055052">
    <property type="term" value="C:ATP-binding cassette (ABC) transporter complex, substrate-binding subunit-containing"/>
    <property type="evidence" value="ECO:0007669"/>
    <property type="project" value="TreeGrafter"/>
</dbReference>
<dbReference type="GO" id="GO:0140359">
    <property type="term" value="F:ABC-type transporter activity"/>
    <property type="evidence" value="ECO:0007669"/>
    <property type="project" value="InterPro"/>
</dbReference>
<dbReference type="GO" id="GO:0005524">
    <property type="term" value="F:ATP binding"/>
    <property type="evidence" value="ECO:0007669"/>
    <property type="project" value="UniProtKB-KW"/>
</dbReference>
<dbReference type="GO" id="GO:0016887">
    <property type="term" value="F:ATP hydrolysis activity"/>
    <property type="evidence" value="ECO:0007669"/>
    <property type="project" value="InterPro"/>
</dbReference>
<dbReference type="GO" id="GO:0008643">
    <property type="term" value="P:carbohydrate transport"/>
    <property type="evidence" value="ECO:0007669"/>
    <property type="project" value="InterPro"/>
</dbReference>
<dbReference type="CDD" id="cd03301">
    <property type="entry name" value="ABC_MalK_N"/>
    <property type="match status" value="1"/>
</dbReference>
<dbReference type="FunFam" id="3.40.50.300:FF:000042">
    <property type="entry name" value="Maltose/maltodextrin ABC transporter, ATP-binding protein"/>
    <property type="match status" value="1"/>
</dbReference>
<dbReference type="Gene3D" id="2.40.50.100">
    <property type="match status" value="1"/>
</dbReference>
<dbReference type="Gene3D" id="2.40.50.140">
    <property type="entry name" value="Nucleic acid-binding proteins"/>
    <property type="match status" value="1"/>
</dbReference>
<dbReference type="Gene3D" id="3.40.50.300">
    <property type="entry name" value="P-loop containing nucleotide triphosphate hydrolases"/>
    <property type="match status" value="1"/>
</dbReference>
<dbReference type="InterPro" id="IPR003593">
    <property type="entry name" value="AAA+_ATPase"/>
</dbReference>
<dbReference type="InterPro" id="IPR003439">
    <property type="entry name" value="ABC_transporter-like_ATP-bd"/>
</dbReference>
<dbReference type="InterPro" id="IPR017871">
    <property type="entry name" value="ABC_transporter-like_CS"/>
</dbReference>
<dbReference type="InterPro" id="IPR015855">
    <property type="entry name" value="ABC_transpr_MalK-like"/>
</dbReference>
<dbReference type="InterPro" id="IPR047641">
    <property type="entry name" value="ABC_transpr_MalK/UgpC-like"/>
</dbReference>
<dbReference type="InterPro" id="IPR008995">
    <property type="entry name" value="Mo/tungstate-bd_C_term_dom"/>
</dbReference>
<dbReference type="InterPro" id="IPR012340">
    <property type="entry name" value="NA-bd_OB-fold"/>
</dbReference>
<dbReference type="InterPro" id="IPR027417">
    <property type="entry name" value="P-loop_NTPase"/>
</dbReference>
<dbReference type="InterPro" id="IPR013611">
    <property type="entry name" value="Transp-assoc_OB_typ2"/>
</dbReference>
<dbReference type="NCBIfam" id="NF008653">
    <property type="entry name" value="PRK11650.1"/>
    <property type="match status" value="1"/>
</dbReference>
<dbReference type="PANTHER" id="PTHR43875:SF10">
    <property type="entry name" value="BLL2173 PROTEIN"/>
    <property type="match status" value="1"/>
</dbReference>
<dbReference type="PANTHER" id="PTHR43875">
    <property type="entry name" value="MALTODEXTRIN IMPORT ATP-BINDING PROTEIN MSMX"/>
    <property type="match status" value="1"/>
</dbReference>
<dbReference type="Pfam" id="PF00005">
    <property type="entry name" value="ABC_tran"/>
    <property type="match status" value="1"/>
</dbReference>
<dbReference type="Pfam" id="PF08402">
    <property type="entry name" value="TOBE_2"/>
    <property type="match status" value="1"/>
</dbReference>
<dbReference type="SMART" id="SM00382">
    <property type="entry name" value="AAA"/>
    <property type="match status" value="1"/>
</dbReference>
<dbReference type="SUPFAM" id="SSF50331">
    <property type="entry name" value="MOP-like"/>
    <property type="match status" value="1"/>
</dbReference>
<dbReference type="SUPFAM" id="SSF52540">
    <property type="entry name" value="P-loop containing nucleoside triphosphate hydrolases"/>
    <property type="match status" value="1"/>
</dbReference>
<dbReference type="PROSITE" id="PS00211">
    <property type="entry name" value="ABC_TRANSPORTER_1"/>
    <property type="match status" value="1"/>
</dbReference>
<dbReference type="PROSITE" id="PS50893">
    <property type="entry name" value="ABC_TRANSPORTER_2"/>
    <property type="match status" value="1"/>
</dbReference>